<reference key="1">
    <citation type="journal article" date="2011" name="J. Bacteriol.">
        <title>Complete genome sequence of the plant growth-promoting endophyte Burkholderia phytofirmans strain PsJN.</title>
        <authorList>
            <person name="Weilharter A."/>
            <person name="Mitter B."/>
            <person name="Shin M.V."/>
            <person name="Chain P.S."/>
            <person name="Nowak J."/>
            <person name="Sessitsch A."/>
        </authorList>
    </citation>
    <scope>NUCLEOTIDE SEQUENCE [LARGE SCALE GENOMIC DNA]</scope>
    <source>
        <strain>DSM 17436 / LMG 22146 / PsJN</strain>
    </source>
</reference>
<protein>
    <recommendedName>
        <fullName evidence="1">Large ribosomal subunit protein uL18</fullName>
    </recommendedName>
    <alternativeName>
        <fullName evidence="2">50S ribosomal protein L18</fullName>
    </alternativeName>
</protein>
<dbReference type="EMBL" id="CP001052">
    <property type="protein sequence ID" value="ACD18018.1"/>
    <property type="molecule type" value="Genomic_DNA"/>
</dbReference>
<dbReference type="RefSeq" id="WP_012434568.1">
    <property type="nucleotide sequence ID" value="NC_010681.1"/>
</dbReference>
<dbReference type="SMR" id="B2T735"/>
<dbReference type="STRING" id="398527.Bphyt_3628"/>
<dbReference type="GeneID" id="97311008"/>
<dbReference type="KEGG" id="bpy:Bphyt_3628"/>
<dbReference type="eggNOG" id="COG0256">
    <property type="taxonomic scope" value="Bacteria"/>
</dbReference>
<dbReference type="HOGENOM" id="CLU_098841_0_1_4"/>
<dbReference type="OrthoDB" id="9810939at2"/>
<dbReference type="Proteomes" id="UP000001739">
    <property type="component" value="Chromosome 1"/>
</dbReference>
<dbReference type="GO" id="GO:0022625">
    <property type="term" value="C:cytosolic large ribosomal subunit"/>
    <property type="evidence" value="ECO:0007669"/>
    <property type="project" value="TreeGrafter"/>
</dbReference>
<dbReference type="GO" id="GO:0008097">
    <property type="term" value="F:5S rRNA binding"/>
    <property type="evidence" value="ECO:0007669"/>
    <property type="project" value="TreeGrafter"/>
</dbReference>
<dbReference type="GO" id="GO:0003735">
    <property type="term" value="F:structural constituent of ribosome"/>
    <property type="evidence" value="ECO:0007669"/>
    <property type="project" value="InterPro"/>
</dbReference>
<dbReference type="GO" id="GO:0006412">
    <property type="term" value="P:translation"/>
    <property type="evidence" value="ECO:0007669"/>
    <property type="project" value="UniProtKB-UniRule"/>
</dbReference>
<dbReference type="CDD" id="cd00432">
    <property type="entry name" value="Ribosomal_L18_L5e"/>
    <property type="match status" value="1"/>
</dbReference>
<dbReference type="FunFam" id="3.30.420.100:FF:000001">
    <property type="entry name" value="50S ribosomal protein L18"/>
    <property type="match status" value="1"/>
</dbReference>
<dbReference type="Gene3D" id="3.30.420.100">
    <property type="match status" value="1"/>
</dbReference>
<dbReference type="HAMAP" id="MF_01337_B">
    <property type="entry name" value="Ribosomal_uL18_B"/>
    <property type="match status" value="1"/>
</dbReference>
<dbReference type="InterPro" id="IPR004389">
    <property type="entry name" value="Ribosomal_uL18_bac-type"/>
</dbReference>
<dbReference type="InterPro" id="IPR005484">
    <property type="entry name" value="Ribosomal_uL18_bac/euk"/>
</dbReference>
<dbReference type="NCBIfam" id="TIGR00060">
    <property type="entry name" value="L18_bact"/>
    <property type="match status" value="1"/>
</dbReference>
<dbReference type="PANTHER" id="PTHR12899">
    <property type="entry name" value="39S RIBOSOMAL PROTEIN L18, MITOCHONDRIAL"/>
    <property type="match status" value="1"/>
</dbReference>
<dbReference type="PANTHER" id="PTHR12899:SF3">
    <property type="entry name" value="LARGE RIBOSOMAL SUBUNIT PROTEIN UL18M"/>
    <property type="match status" value="1"/>
</dbReference>
<dbReference type="Pfam" id="PF00861">
    <property type="entry name" value="Ribosomal_L18p"/>
    <property type="match status" value="1"/>
</dbReference>
<dbReference type="SUPFAM" id="SSF53137">
    <property type="entry name" value="Translational machinery components"/>
    <property type="match status" value="1"/>
</dbReference>
<proteinExistence type="inferred from homology"/>
<organism>
    <name type="scientific">Paraburkholderia phytofirmans (strain DSM 17436 / LMG 22146 / PsJN)</name>
    <name type="common">Burkholderia phytofirmans</name>
    <dbReference type="NCBI Taxonomy" id="398527"/>
    <lineage>
        <taxon>Bacteria</taxon>
        <taxon>Pseudomonadati</taxon>
        <taxon>Pseudomonadota</taxon>
        <taxon>Betaproteobacteria</taxon>
        <taxon>Burkholderiales</taxon>
        <taxon>Burkholderiaceae</taxon>
        <taxon>Paraburkholderia</taxon>
    </lineage>
</organism>
<comment type="function">
    <text evidence="1">This is one of the proteins that bind and probably mediate the attachment of the 5S RNA into the large ribosomal subunit, where it forms part of the central protuberance.</text>
</comment>
<comment type="subunit">
    <text evidence="1">Part of the 50S ribosomal subunit; part of the 5S rRNA/L5/L18/L25 subcomplex. Contacts the 5S and 23S rRNAs.</text>
</comment>
<comment type="similarity">
    <text evidence="1">Belongs to the universal ribosomal protein uL18 family.</text>
</comment>
<accession>B2T735</accession>
<name>RL18_PARPJ</name>
<gene>
    <name evidence="1" type="primary">rplR</name>
    <name type="ordered locus">Bphyt_3628</name>
</gene>
<keyword id="KW-0687">Ribonucleoprotein</keyword>
<keyword id="KW-0689">Ribosomal protein</keyword>
<keyword id="KW-0694">RNA-binding</keyword>
<keyword id="KW-0699">rRNA-binding</keyword>
<feature type="chain" id="PRO_1000142634" description="Large ribosomal subunit protein uL18">
    <location>
        <begin position="1"/>
        <end position="121"/>
    </location>
</feature>
<sequence>MDKTQSRLRRARQTRIKIAELQVARLAVHRTNTHIYAQVFSPCGTKVLASASTLEAEVRAQLADQTGKGGNVNAATLIGKRIAEKAKAAGIESVAFDRSGFRYHGRVKALADAAREAGLKF</sequence>
<evidence type="ECO:0000255" key="1">
    <source>
        <dbReference type="HAMAP-Rule" id="MF_01337"/>
    </source>
</evidence>
<evidence type="ECO:0000305" key="2"/>